<name>RECR_MYCTO</name>
<reference key="1">
    <citation type="journal article" date="2002" name="J. Bacteriol.">
        <title>Whole-genome comparison of Mycobacterium tuberculosis clinical and laboratory strains.</title>
        <authorList>
            <person name="Fleischmann R.D."/>
            <person name="Alland D."/>
            <person name="Eisen J.A."/>
            <person name="Carpenter L."/>
            <person name="White O."/>
            <person name="Peterson J.D."/>
            <person name="DeBoy R.T."/>
            <person name="Dodson R.J."/>
            <person name="Gwinn M.L."/>
            <person name="Haft D.H."/>
            <person name="Hickey E.K."/>
            <person name="Kolonay J.F."/>
            <person name="Nelson W.C."/>
            <person name="Umayam L.A."/>
            <person name="Ermolaeva M.D."/>
            <person name="Salzberg S.L."/>
            <person name="Delcher A."/>
            <person name="Utterback T.R."/>
            <person name="Weidman J.F."/>
            <person name="Khouri H.M."/>
            <person name="Gill J."/>
            <person name="Mikula A."/>
            <person name="Bishai W."/>
            <person name="Jacobs W.R. Jr."/>
            <person name="Venter J.C."/>
            <person name="Fraser C.M."/>
        </authorList>
    </citation>
    <scope>NUCLEOTIDE SEQUENCE [LARGE SCALE GENOMIC DNA]</scope>
    <source>
        <strain>CDC 1551 / Oshkosh</strain>
    </source>
</reference>
<evidence type="ECO:0000255" key="1">
    <source>
        <dbReference type="HAMAP-Rule" id="MF_00017"/>
    </source>
</evidence>
<organism>
    <name type="scientific">Mycobacterium tuberculosis (strain CDC 1551 / Oshkosh)</name>
    <dbReference type="NCBI Taxonomy" id="83331"/>
    <lineage>
        <taxon>Bacteria</taxon>
        <taxon>Bacillati</taxon>
        <taxon>Actinomycetota</taxon>
        <taxon>Actinomycetes</taxon>
        <taxon>Mycobacteriales</taxon>
        <taxon>Mycobacteriaceae</taxon>
        <taxon>Mycobacterium</taxon>
        <taxon>Mycobacterium tuberculosis complex</taxon>
    </lineage>
</organism>
<comment type="function">
    <text evidence="1">May play a role in DNA repair. It seems to be involved in an RecBC-independent recombinational process of DNA repair. It may act with RecF and RecO.</text>
</comment>
<comment type="similarity">
    <text evidence="1">Belongs to the RecR family.</text>
</comment>
<accession>P9WHI2</accession>
<accession>L0TGA9</accession>
<accession>O69682</accession>
<accession>P65990</accession>
<sequence length="203" mass="22119">MFEGPVQDLIDELGKLPGIGPKSAQRIAFHLLSVEPSDIDRLTGVLAKVRDGVRFCAVCGNVSDNERCRICSDIRRDASVVCIVEEPKDIQAVERTREFRGRYHVLGGALDPLSGIGPDQLRIRELLSRIGERVDDVDVTEVIIATDPNTEGEATATYLVRMLRDIPGLTVTRIASGLPMGGDLEFADELTLGRALAGRRVLA</sequence>
<protein>
    <recommendedName>
        <fullName evidence="1">Recombination protein RecR</fullName>
    </recommendedName>
</protein>
<dbReference type="EMBL" id="AE000516">
    <property type="protein sequence ID" value="AAK48187.1"/>
    <property type="molecule type" value="Genomic_DNA"/>
</dbReference>
<dbReference type="PIR" id="D70795">
    <property type="entry name" value="D70795"/>
</dbReference>
<dbReference type="RefSeq" id="WP_003420407.1">
    <property type="nucleotide sequence ID" value="NZ_KK341227.1"/>
</dbReference>
<dbReference type="SMR" id="P9WHI2"/>
<dbReference type="GeneID" id="45427714"/>
<dbReference type="KEGG" id="mtc:MT3818"/>
<dbReference type="PATRIC" id="fig|83331.31.peg.4111"/>
<dbReference type="HOGENOM" id="CLU_060739_1_0_11"/>
<dbReference type="Proteomes" id="UP000001020">
    <property type="component" value="Chromosome"/>
</dbReference>
<dbReference type="GO" id="GO:0003677">
    <property type="term" value="F:DNA binding"/>
    <property type="evidence" value="ECO:0007669"/>
    <property type="project" value="UniProtKB-UniRule"/>
</dbReference>
<dbReference type="GO" id="GO:0008270">
    <property type="term" value="F:zinc ion binding"/>
    <property type="evidence" value="ECO:0007669"/>
    <property type="project" value="UniProtKB-KW"/>
</dbReference>
<dbReference type="GO" id="GO:0006310">
    <property type="term" value="P:DNA recombination"/>
    <property type="evidence" value="ECO:0007669"/>
    <property type="project" value="UniProtKB-UniRule"/>
</dbReference>
<dbReference type="GO" id="GO:0006281">
    <property type="term" value="P:DNA repair"/>
    <property type="evidence" value="ECO:0007669"/>
    <property type="project" value="UniProtKB-UniRule"/>
</dbReference>
<dbReference type="CDD" id="cd01025">
    <property type="entry name" value="TOPRIM_recR"/>
    <property type="match status" value="1"/>
</dbReference>
<dbReference type="Gene3D" id="3.30.60.80">
    <property type="match status" value="1"/>
</dbReference>
<dbReference type="Gene3D" id="3.40.1360.10">
    <property type="match status" value="1"/>
</dbReference>
<dbReference type="Gene3D" id="6.10.250.240">
    <property type="match status" value="1"/>
</dbReference>
<dbReference type="Gene3D" id="1.10.8.420">
    <property type="entry name" value="RecR Domain 1"/>
    <property type="match status" value="1"/>
</dbReference>
<dbReference type="HAMAP" id="MF_00017">
    <property type="entry name" value="RecR"/>
    <property type="match status" value="1"/>
</dbReference>
<dbReference type="InterPro" id="IPR000093">
    <property type="entry name" value="DNA_Rcmb_RecR"/>
</dbReference>
<dbReference type="InterPro" id="IPR003583">
    <property type="entry name" value="Hlx-hairpin-Hlx_DNA-bd_motif"/>
</dbReference>
<dbReference type="InterPro" id="IPR023627">
    <property type="entry name" value="Rcmb_RecR"/>
</dbReference>
<dbReference type="InterPro" id="IPR015967">
    <property type="entry name" value="Rcmb_RecR_Znf"/>
</dbReference>
<dbReference type="InterPro" id="IPR006171">
    <property type="entry name" value="TOPRIM_dom"/>
</dbReference>
<dbReference type="InterPro" id="IPR034137">
    <property type="entry name" value="TOPRIM_RecR"/>
</dbReference>
<dbReference type="NCBIfam" id="TIGR00615">
    <property type="entry name" value="recR"/>
    <property type="match status" value="1"/>
</dbReference>
<dbReference type="PANTHER" id="PTHR30446">
    <property type="entry name" value="RECOMBINATION PROTEIN RECR"/>
    <property type="match status" value="1"/>
</dbReference>
<dbReference type="PANTHER" id="PTHR30446:SF0">
    <property type="entry name" value="RECOMBINATION PROTEIN RECR"/>
    <property type="match status" value="1"/>
</dbReference>
<dbReference type="Pfam" id="PF21175">
    <property type="entry name" value="RecR_C"/>
    <property type="match status" value="1"/>
</dbReference>
<dbReference type="Pfam" id="PF21176">
    <property type="entry name" value="RecR_HhH"/>
    <property type="match status" value="1"/>
</dbReference>
<dbReference type="Pfam" id="PF02132">
    <property type="entry name" value="RecR_ZnF"/>
    <property type="match status" value="1"/>
</dbReference>
<dbReference type="Pfam" id="PF13662">
    <property type="entry name" value="Toprim_4"/>
    <property type="match status" value="1"/>
</dbReference>
<dbReference type="SMART" id="SM00278">
    <property type="entry name" value="HhH1"/>
    <property type="match status" value="1"/>
</dbReference>
<dbReference type="SMART" id="SM00493">
    <property type="entry name" value="TOPRIM"/>
    <property type="match status" value="1"/>
</dbReference>
<dbReference type="SUPFAM" id="SSF111304">
    <property type="entry name" value="Recombination protein RecR"/>
    <property type="match status" value="1"/>
</dbReference>
<dbReference type="PROSITE" id="PS01300">
    <property type="entry name" value="RECR"/>
    <property type="match status" value="1"/>
</dbReference>
<dbReference type="PROSITE" id="PS50880">
    <property type="entry name" value="TOPRIM"/>
    <property type="match status" value="1"/>
</dbReference>
<proteinExistence type="inferred from homology"/>
<keyword id="KW-0227">DNA damage</keyword>
<keyword id="KW-0233">DNA recombination</keyword>
<keyword id="KW-0234">DNA repair</keyword>
<keyword id="KW-0479">Metal-binding</keyword>
<keyword id="KW-1185">Reference proteome</keyword>
<keyword id="KW-0862">Zinc</keyword>
<keyword id="KW-0863">Zinc-finger</keyword>
<gene>
    <name evidence="1" type="primary">recR</name>
    <name type="ordered locus">MT3818</name>
</gene>
<feature type="chain" id="PRO_0000428182" description="Recombination protein RecR">
    <location>
        <begin position="1"/>
        <end position="203"/>
    </location>
</feature>
<feature type="domain" description="Toprim" evidence="1">
    <location>
        <begin position="79"/>
        <end position="179"/>
    </location>
</feature>
<feature type="zinc finger region" description="C4-type" evidence="1">
    <location>
        <begin position="56"/>
        <end position="71"/>
    </location>
</feature>